<reference key="1">
    <citation type="journal article" date="2008" name="J. Bacteriol.">
        <title>The genome of Heliobacterium modesticaldum, a phototrophic representative of the Firmicutes containing the simplest photosynthetic apparatus.</title>
        <authorList>
            <person name="Sattley W.M."/>
            <person name="Madigan M.T."/>
            <person name="Swingley W.D."/>
            <person name="Cheung P.C."/>
            <person name="Clocksin K.M."/>
            <person name="Conrad A.L."/>
            <person name="Dejesa L.C."/>
            <person name="Honchak B.M."/>
            <person name="Jung D.O."/>
            <person name="Karbach L.E."/>
            <person name="Kurdoglu A."/>
            <person name="Lahiri S."/>
            <person name="Mastrian S.D."/>
            <person name="Page L.E."/>
            <person name="Taylor H.L."/>
            <person name="Wang Z.T."/>
            <person name="Raymond J."/>
            <person name="Chen M."/>
            <person name="Blankenship R.E."/>
            <person name="Touchman J.W."/>
        </authorList>
    </citation>
    <scope>NUCLEOTIDE SEQUENCE [LARGE SCALE GENOMIC DNA]</scope>
    <source>
        <strain>ATCC 51547 / Ice1</strain>
    </source>
</reference>
<accession>B0TBM7</accession>
<name>BCHN_HELMI</name>
<proteinExistence type="inferred from homology"/>
<gene>
    <name evidence="1" type="primary">bchN</name>
    <name type="ordered locus">Helmi_12410</name>
    <name type="ORF">HM1_0686</name>
</gene>
<keyword id="KW-0004">4Fe-4S</keyword>
<keyword id="KW-0067">ATP-binding</keyword>
<keyword id="KW-0077">Bacteriochlorophyll biosynthesis</keyword>
<keyword id="KW-0149">Chlorophyll biosynthesis</keyword>
<keyword id="KW-0408">Iron</keyword>
<keyword id="KW-0411">Iron-sulfur</keyword>
<keyword id="KW-0479">Metal-binding</keyword>
<keyword id="KW-0547">Nucleotide-binding</keyword>
<keyword id="KW-0560">Oxidoreductase</keyword>
<keyword id="KW-0602">Photosynthesis</keyword>
<keyword id="KW-1185">Reference proteome</keyword>
<protein>
    <recommendedName>
        <fullName evidence="1">Light-independent protochlorophyllide reductase subunit N</fullName>
        <shortName evidence="1">DPOR subunit N</shortName>
        <shortName evidence="1">LI-POR subunit N</shortName>
        <ecNumber evidence="1">1.3.7.7</ecNumber>
    </recommendedName>
</protein>
<sequence length="443" mass="49008">MEGIERENGCFHTFCPIASVAWLHRKIKDSFFLIVGTHTCAHFIQTALDVMVYAHSRFGFAVLEESDLVAASPTAELAKVVEDIKAEWQPKVIFLLSTCSCDILKLDLENSSKDLTIRFGFPVVPVQTSGLDRTFTQGEDAVLHALLPFVPKEDPKVAVVEEKKRSWFSFGKDEGNKASVPAAPTRNLVLVGAVTDSTTQQLQWELKQLGLERVDVFPSGDITNMPVINEHTVIVPLQPYLSDTLATLRRERGAKVLTTLLPIGPDGTARFLEAICAEFGLDASPVAEREAQTWRSLESQRALLRGKRIMFLGDNLLEIPLARFLTACGAEVVEAGTPYVHAKDLSEEIARLREKGVPIVESPNFSAQVERIDRLRPDLIVAGLGICNPLEAAGYTTAWSIEFTFAQIHGFVNAIDLIKLFVKPLLKRQALLEQGWTEAGWMS</sequence>
<comment type="function">
    <text evidence="1">Component of the dark-operative protochlorophyllide reductase (DPOR) that uses Mg-ATP and reduced ferredoxin to reduce ring D of protochlorophyllide (Pchlide) to form chlorophyllide a (Chlide). This reaction is light-independent. The NB-protein (BchN-BchB) is the catalytic component of the complex.</text>
</comment>
<comment type="catalytic activity">
    <reaction evidence="1">
        <text>chlorophyllide a + oxidized 2[4Fe-4S]-[ferredoxin] + 2 ADP + 2 phosphate = protochlorophyllide a + reduced 2[4Fe-4S]-[ferredoxin] + 2 ATP + 2 H2O</text>
        <dbReference type="Rhea" id="RHEA:28202"/>
        <dbReference type="Rhea" id="RHEA-COMP:10002"/>
        <dbReference type="Rhea" id="RHEA-COMP:10004"/>
        <dbReference type="ChEBI" id="CHEBI:15377"/>
        <dbReference type="ChEBI" id="CHEBI:30616"/>
        <dbReference type="ChEBI" id="CHEBI:33722"/>
        <dbReference type="ChEBI" id="CHEBI:33723"/>
        <dbReference type="ChEBI" id="CHEBI:43474"/>
        <dbReference type="ChEBI" id="CHEBI:83348"/>
        <dbReference type="ChEBI" id="CHEBI:83350"/>
        <dbReference type="ChEBI" id="CHEBI:456216"/>
        <dbReference type="EC" id="1.3.7.7"/>
    </reaction>
</comment>
<comment type="cofactor">
    <cofactor evidence="1">
        <name>[4Fe-4S] cluster</name>
        <dbReference type="ChEBI" id="CHEBI:49883"/>
    </cofactor>
    <text evidence="1">Binds 1 [4Fe-4S] cluster per heterodimer. The cluster is bound at the heterodimer interface by residues from both subunits.</text>
</comment>
<comment type="pathway">
    <text evidence="1">Porphyrin-containing compound metabolism; bacteriochlorophyll biosynthesis (light-independent).</text>
</comment>
<comment type="subunit">
    <text evidence="1">Protochlorophyllide reductase is composed of three subunits; BchL, BchN and BchB. Forms a heterotetramer of two BchB and two BchN subunits.</text>
</comment>
<comment type="similarity">
    <text evidence="1">Belongs to the BchN/ChlN family.</text>
</comment>
<feature type="chain" id="PRO_1000120520" description="Light-independent protochlorophyllide reductase subunit N">
    <location>
        <begin position="1"/>
        <end position="443"/>
    </location>
</feature>
<feature type="binding site" evidence="1">
    <location>
        <position position="15"/>
    </location>
    <ligand>
        <name>[4Fe-4S] cluster</name>
        <dbReference type="ChEBI" id="CHEBI:49883"/>
        <note>ligand shared with heterodimeric partner</note>
    </ligand>
</feature>
<feature type="binding site" evidence="1">
    <location>
        <position position="40"/>
    </location>
    <ligand>
        <name>[4Fe-4S] cluster</name>
        <dbReference type="ChEBI" id="CHEBI:49883"/>
        <note>ligand shared with heterodimeric partner</note>
    </ligand>
</feature>
<feature type="binding site" evidence="1">
    <location>
        <position position="99"/>
    </location>
    <ligand>
        <name>[4Fe-4S] cluster</name>
        <dbReference type="ChEBI" id="CHEBI:49883"/>
        <note>ligand shared with heterodimeric partner</note>
    </ligand>
</feature>
<evidence type="ECO:0000255" key="1">
    <source>
        <dbReference type="HAMAP-Rule" id="MF_00352"/>
    </source>
</evidence>
<dbReference type="EC" id="1.3.7.7" evidence="1"/>
<dbReference type="EMBL" id="CP000930">
    <property type="protein sequence ID" value="ABZ83866.1"/>
    <property type="molecule type" value="Genomic_DNA"/>
</dbReference>
<dbReference type="RefSeq" id="WP_012282384.1">
    <property type="nucleotide sequence ID" value="NC_010337.2"/>
</dbReference>
<dbReference type="SMR" id="B0TBM7"/>
<dbReference type="STRING" id="498761.HM1_0686"/>
<dbReference type="KEGG" id="hmo:HM1_0686"/>
<dbReference type="eggNOG" id="COG2710">
    <property type="taxonomic scope" value="Bacteria"/>
</dbReference>
<dbReference type="HOGENOM" id="CLU_037170_0_0_9"/>
<dbReference type="OrthoDB" id="495776at2"/>
<dbReference type="UniPathway" id="UPA00671"/>
<dbReference type="Proteomes" id="UP000008550">
    <property type="component" value="Chromosome"/>
</dbReference>
<dbReference type="GO" id="GO:0051539">
    <property type="term" value="F:4 iron, 4 sulfur cluster binding"/>
    <property type="evidence" value="ECO:0007669"/>
    <property type="project" value="UniProtKB-UniRule"/>
</dbReference>
<dbReference type="GO" id="GO:0005524">
    <property type="term" value="F:ATP binding"/>
    <property type="evidence" value="ECO:0007669"/>
    <property type="project" value="UniProtKB-UniRule"/>
</dbReference>
<dbReference type="GO" id="GO:0046872">
    <property type="term" value="F:metal ion binding"/>
    <property type="evidence" value="ECO:0007669"/>
    <property type="project" value="UniProtKB-KW"/>
</dbReference>
<dbReference type="GO" id="GO:0016730">
    <property type="term" value="F:oxidoreductase activity, acting on iron-sulfur proteins as donors"/>
    <property type="evidence" value="ECO:0007669"/>
    <property type="project" value="InterPro"/>
</dbReference>
<dbReference type="GO" id="GO:0016636">
    <property type="term" value="F:oxidoreductase activity, acting on the CH-CH group of donors, iron-sulfur protein as acceptor"/>
    <property type="evidence" value="ECO:0007669"/>
    <property type="project" value="UniProtKB-UniRule"/>
</dbReference>
<dbReference type="GO" id="GO:0036070">
    <property type="term" value="P:light-independent bacteriochlorophyll biosynthetic process"/>
    <property type="evidence" value="ECO:0007669"/>
    <property type="project" value="UniProtKB-UniRule"/>
</dbReference>
<dbReference type="GO" id="GO:0019685">
    <property type="term" value="P:photosynthesis, dark reaction"/>
    <property type="evidence" value="ECO:0007669"/>
    <property type="project" value="InterPro"/>
</dbReference>
<dbReference type="Gene3D" id="3.40.50.1980">
    <property type="entry name" value="Nitrogenase molybdenum iron protein domain"/>
    <property type="match status" value="3"/>
</dbReference>
<dbReference type="HAMAP" id="MF_00352">
    <property type="entry name" value="ChlN_BchN"/>
    <property type="match status" value="1"/>
</dbReference>
<dbReference type="InterPro" id="IPR050293">
    <property type="entry name" value="LIPOR_BchN/ChlN"/>
</dbReference>
<dbReference type="InterPro" id="IPR000510">
    <property type="entry name" value="Nase/OxRdtase_comp1"/>
</dbReference>
<dbReference type="InterPro" id="IPR005970">
    <property type="entry name" value="Protochl_reductN"/>
</dbReference>
<dbReference type="NCBIfam" id="TIGR01279">
    <property type="entry name" value="DPOR_bchN"/>
    <property type="match status" value="1"/>
</dbReference>
<dbReference type="NCBIfam" id="NF002768">
    <property type="entry name" value="PRK02842.1"/>
    <property type="match status" value="1"/>
</dbReference>
<dbReference type="PANTHER" id="PTHR39429">
    <property type="entry name" value="LIGHT-INDEPENDENT PROTOCHLOROPHYLLIDE REDUCTASE SUBUNIT N"/>
    <property type="match status" value="1"/>
</dbReference>
<dbReference type="PANTHER" id="PTHR39429:SF3">
    <property type="entry name" value="LIGHT-INDEPENDENT PROTOCHLOROPHYLLIDE REDUCTASE SUBUNIT N"/>
    <property type="match status" value="1"/>
</dbReference>
<dbReference type="Pfam" id="PF00148">
    <property type="entry name" value="Oxidored_nitro"/>
    <property type="match status" value="1"/>
</dbReference>
<dbReference type="PIRSF" id="PIRSF000162">
    <property type="entry name" value="P_chlorophyll_rd"/>
    <property type="match status" value="1"/>
</dbReference>
<dbReference type="SUPFAM" id="SSF53807">
    <property type="entry name" value="Helical backbone' metal receptor"/>
    <property type="match status" value="1"/>
</dbReference>
<organism>
    <name type="scientific">Heliobacterium modesticaldum (strain ATCC 51547 / Ice1)</name>
    <dbReference type="NCBI Taxonomy" id="498761"/>
    <lineage>
        <taxon>Bacteria</taxon>
        <taxon>Bacillati</taxon>
        <taxon>Bacillota</taxon>
        <taxon>Clostridia</taxon>
        <taxon>Eubacteriales</taxon>
        <taxon>Heliobacteriaceae</taxon>
        <taxon>Heliomicrobium</taxon>
    </lineage>
</organism>